<organism>
    <name type="scientific">Pseudomonas aeruginosa (strain ATCC 15692 / DSM 22644 / CIP 104116 / JCM 14847 / LMG 12228 / 1C / PRS 101 / PAO1)</name>
    <dbReference type="NCBI Taxonomy" id="208964"/>
    <lineage>
        <taxon>Bacteria</taxon>
        <taxon>Pseudomonadati</taxon>
        <taxon>Pseudomonadota</taxon>
        <taxon>Gammaproteobacteria</taxon>
        <taxon>Pseudomonadales</taxon>
        <taxon>Pseudomonadaceae</taxon>
        <taxon>Pseudomonas</taxon>
    </lineage>
</organism>
<name>TRUA_PSEAE</name>
<evidence type="ECO:0000255" key="1">
    <source>
        <dbReference type="HAMAP-Rule" id="MF_00171"/>
    </source>
</evidence>
<keyword id="KW-0413">Isomerase</keyword>
<keyword id="KW-1185">Reference proteome</keyword>
<keyword id="KW-0819">tRNA processing</keyword>
<dbReference type="EC" id="5.4.99.12" evidence="1"/>
<dbReference type="EMBL" id="U93274">
    <property type="protein sequence ID" value="AAC23941.1"/>
    <property type="molecule type" value="Genomic_DNA"/>
</dbReference>
<dbReference type="EMBL" id="AE004091">
    <property type="protein sequence ID" value="AAG06502.1"/>
    <property type="molecule type" value="Genomic_DNA"/>
</dbReference>
<dbReference type="PIR" id="E83257">
    <property type="entry name" value="E83257"/>
</dbReference>
<dbReference type="RefSeq" id="NP_251804.1">
    <property type="nucleotide sequence ID" value="NC_002516.2"/>
</dbReference>
<dbReference type="RefSeq" id="WP_003091390.1">
    <property type="nucleotide sequence ID" value="NZ_QZGE01000023.1"/>
</dbReference>
<dbReference type="SMR" id="O87016"/>
<dbReference type="FunCoup" id="O87016">
    <property type="interactions" value="593"/>
</dbReference>
<dbReference type="STRING" id="208964.PA3114"/>
<dbReference type="PaxDb" id="208964-PA3114"/>
<dbReference type="DNASU" id="879910"/>
<dbReference type="GeneID" id="879910"/>
<dbReference type="KEGG" id="pae:PA3114"/>
<dbReference type="PATRIC" id="fig|208964.12.peg.3266"/>
<dbReference type="PseudoCAP" id="PA3114"/>
<dbReference type="HOGENOM" id="CLU_014673_0_2_6"/>
<dbReference type="InParanoid" id="O87016"/>
<dbReference type="OrthoDB" id="9811823at2"/>
<dbReference type="PhylomeDB" id="O87016"/>
<dbReference type="BioCyc" id="PAER208964:G1FZ6-3170-MONOMER"/>
<dbReference type="BRENDA" id="5.4.99.12">
    <property type="organism ID" value="5087"/>
</dbReference>
<dbReference type="Proteomes" id="UP000002438">
    <property type="component" value="Chromosome"/>
</dbReference>
<dbReference type="GO" id="GO:0009982">
    <property type="term" value="F:pseudouridine synthase activity"/>
    <property type="evidence" value="ECO:0000318"/>
    <property type="project" value="GO_Central"/>
</dbReference>
<dbReference type="GO" id="GO:0003723">
    <property type="term" value="F:RNA binding"/>
    <property type="evidence" value="ECO:0007669"/>
    <property type="project" value="InterPro"/>
</dbReference>
<dbReference type="GO" id="GO:0160147">
    <property type="term" value="F:tRNA pseudouridine(38-40) synthase activity"/>
    <property type="evidence" value="ECO:0007669"/>
    <property type="project" value="UniProtKB-EC"/>
</dbReference>
<dbReference type="GO" id="GO:0031119">
    <property type="term" value="P:tRNA pseudouridine synthesis"/>
    <property type="evidence" value="ECO:0000318"/>
    <property type="project" value="GO_Central"/>
</dbReference>
<dbReference type="CDD" id="cd02570">
    <property type="entry name" value="PseudoU_synth_EcTruA"/>
    <property type="match status" value="1"/>
</dbReference>
<dbReference type="FunFam" id="3.30.70.580:FF:000001">
    <property type="entry name" value="tRNA pseudouridine synthase A"/>
    <property type="match status" value="1"/>
</dbReference>
<dbReference type="Gene3D" id="3.30.70.660">
    <property type="entry name" value="Pseudouridine synthase I, catalytic domain, C-terminal subdomain"/>
    <property type="match status" value="1"/>
</dbReference>
<dbReference type="Gene3D" id="3.30.70.580">
    <property type="entry name" value="Pseudouridine synthase I, catalytic domain, N-terminal subdomain"/>
    <property type="match status" value="1"/>
</dbReference>
<dbReference type="HAMAP" id="MF_00171">
    <property type="entry name" value="TruA"/>
    <property type="match status" value="1"/>
</dbReference>
<dbReference type="InterPro" id="IPR020103">
    <property type="entry name" value="PsdUridine_synth_cat_dom_sf"/>
</dbReference>
<dbReference type="InterPro" id="IPR001406">
    <property type="entry name" value="PsdUridine_synth_TruA"/>
</dbReference>
<dbReference type="InterPro" id="IPR020097">
    <property type="entry name" value="PsdUridine_synth_TruA_a/b_dom"/>
</dbReference>
<dbReference type="InterPro" id="IPR020095">
    <property type="entry name" value="PsdUridine_synth_TruA_C"/>
</dbReference>
<dbReference type="InterPro" id="IPR020094">
    <property type="entry name" value="TruA/RsuA/RluB/E/F_N"/>
</dbReference>
<dbReference type="NCBIfam" id="TIGR00071">
    <property type="entry name" value="hisT_truA"/>
    <property type="match status" value="1"/>
</dbReference>
<dbReference type="PANTHER" id="PTHR11142">
    <property type="entry name" value="PSEUDOURIDYLATE SYNTHASE"/>
    <property type="match status" value="1"/>
</dbReference>
<dbReference type="PANTHER" id="PTHR11142:SF0">
    <property type="entry name" value="TRNA PSEUDOURIDINE SYNTHASE-LIKE 1"/>
    <property type="match status" value="1"/>
</dbReference>
<dbReference type="Pfam" id="PF01416">
    <property type="entry name" value="PseudoU_synth_1"/>
    <property type="match status" value="2"/>
</dbReference>
<dbReference type="PIRSF" id="PIRSF001430">
    <property type="entry name" value="tRNA_psdUrid_synth"/>
    <property type="match status" value="1"/>
</dbReference>
<dbReference type="SUPFAM" id="SSF55120">
    <property type="entry name" value="Pseudouridine synthase"/>
    <property type="match status" value="1"/>
</dbReference>
<accession>O87016</accession>
<protein>
    <recommendedName>
        <fullName evidence="1">tRNA pseudouridine synthase A</fullName>
        <ecNumber evidence="1">5.4.99.12</ecNumber>
    </recommendedName>
    <alternativeName>
        <fullName evidence="1">tRNA pseudouridine(38-40) synthase</fullName>
    </alternativeName>
    <alternativeName>
        <fullName evidence="1">tRNA pseudouridylate synthase I</fullName>
    </alternativeName>
    <alternativeName>
        <fullName evidence="1">tRNA-uridine isomerase I</fullName>
    </alternativeName>
</protein>
<sequence length="285" mass="31483">MNDVVPPAAAESAAAGVSRIALGIEYKGSRYRGWQRQEAGVPSVQEALERALSKVAAEPVGVICAGRTDAAVHASGQVVHFDTAVERPLKAWVMGTNANLPADISVTWARVMPAHFHARFSAMARRYRYAIYNDPIRPAHLAEEVTWNHRPLDIGRMREAAQVLVGTHDFTSFRAVQCQAKSPVKTMHHVRLLEHGRLIVLDIRGNAFLHHMVRNIAGVLMTIGAGERPIEWAKEVLEARDRRAGGVTAHPYGLYLVRVEYPGEFELPERYLGPHFLSGLPDIVG</sequence>
<proteinExistence type="inferred from homology"/>
<feature type="chain" id="PRO_0000057434" description="tRNA pseudouridine synthase A">
    <location>
        <begin position="1"/>
        <end position="285"/>
    </location>
</feature>
<feature type="active site" description="Nucleophile" evidence="1">
    <location>
        <position position="69"/>
    </location>
</feature>
<feature type="binding site" evidence="1">
    <location>
        <position position="127"/>
    </location>
    <ligand>
        <name>substrate</name>
    </ligand>
</feature>
<comment type="function">
    <text evidence="1">Formation of pseudouridine at positions 38, 39 and 40 in the anticodon stem and loop of transfer RNAs.</text>
</comment>
<comment type="catalytic activity">
    <reaction evidence="1">
        <text>uridine(38/39/40) in tRNA = pseudouridine(38/39/40) in tRNA</text>
        <dbReference type="Rhea" id="RHEA:22376"/>
        <dbReference type="Rhea" id="RHEA-COMP:10085"/>
        <dbReference type="Rhea" id="RHEA-COMP:10087"/>
        <dbReference type="ChEBI" id="CHEBI:65314"/>
        <dbReference type="ChEBI" id="CHEBI:65315"/>
        <dbReference type="EC" id="5.4.99.12"/>
    </reaction>
</comment>
<comment type="subunit">
    <text evidence="1">Homodimer.</text>
</comment>
<comment type="similarity">
    <text evidence="1">Belongs to the tRNA pseudouridine synthase TruA family.</text>
</comment>
<gene>
    <name evidence="1" type="primary">truA</name>
    <name type="synonym">hisT</name>
    <name type="ordered locus">PA3114</name>
</gene>
<reference key="1">
    <citation type="submission" date="1997-03" db="EMBL/GenBank/DDBJ databases">
        <title>Pseudomonas aeruginosa twitching motility gene fimV.</title>
        <authorList>
            <person name="Semmler A."/>
            <person name="Whitchurch C.B."/>
            <person name="Mattick J.S."/>
        </authorList>
    </citation>
    <scope>NUCLEOTIDE SEQUENCE [GENOMIC DNA]</scope>
    <source>
        <strain>ATCC 15692 / DSM 22644 / CIP 104116 / JCM 14847 / LMG 12228 / 1C / PRS 101 / PAO1</strain>
    </source>
</reference>
<reference key="2">
    <citation type="journal article" date="2000" name="Nature">
        <title>Complete genome sequence of Pseudomonas aeruginosa PAO1, an opportunistic pathogen.</title>
        <authorList>
            <person name="Stover C.K."/>
            <person name="Pham X.-Q.T."/>
            <person name="Erwin A.L."/>
            <person name="Mizoguchi S.D."/>
            <person name="Warrener P."/>
            <person name="Hickey M.J."/>
            <person name="Brinkman F.S.L."/>
            <person name="Hufnagle W.O."/>
            <person name="Kowalik D.J."/>
            <person name="Lagrou M."/>
            <person name="Garber R.L."/>
            <person name="Goltry L."/>
            <person name="Tolentino E."/>
            <person name="Westbrock-Wadman S."/>
            <person name="Yuan Y."/>
            <person name="Brody L.L."/>
            <person name="Coulter S.N."/>
            <person name="Folger K.R."/>
            <person name="Kas A."/>
            <person name="Larbig K."/>
            <person name="Lim R.M."/>
            <person name="Smith K.A."/>
            <person name="Spencer D.H."/>
            <person name="Wong G.K.-S."/>
            <person name="Wu Z."/>
            <person name="Paulsen I.T."/>
            <person name="Reizer J."/>
            <person name="Saier M.H. Jr."/>
            <person name="Hancock R.E.W."/>
            <person name="Lory S."/>
            <person name="Olson M.V."/>
        </authorList>
    </citation>
    <scope>NUCLEOTIDE SEQUENCE [LARGE SCALE GENOMIC DNA]</scope>
    <source>
        <strain>ATCC 15692 / DSM 22644 / CIP 104116 / JCM 14847 / LMG 12228 / 1C / PRS 101 / PAO1</strain>
    </source>
</reference>